<accession>P42347</accession>
<organism>
    <name type="scientific">Glycine max</name>
    <name type="common">Soybean</name>
    <name type="synonym">Glycine hispida</name>
    <dbReference type="NCBI Taxonomy" id="3847"/>
    <lineage>
        <taxon>Eukaryota</taxon>
        <taxon>Viridiplantae</taxon>
        <taxon>Streptophyta</taxon>
        <taxon>Embryophyta</taxon>
        <taxon>Tracheophyta</taxon>
        <taxon>Spermatophyta</taxon>
        <taxon>Magnoliopsida</taxon>
        <taxon>eudicotyledons</taxon>
        <taxon>Gunneridae</taxon>
        <taxon>Pentapetalae</taxon>
        <taxon>rosids</taxon>
        <taxon>fabids</taxon>
        <taxon>Fabales</taxon>
        <taxon>Fabaceae</taxon>
        <taxon>Papilionoideae</taxon>
        <taxon>50 kb inversion clade</taxon>
        <taxon>NPAAA clade</taxon>
        <taxon>indigoferoid/millettioid clade</taxon>
        <taxon>Phaseoleae</taxon>
        <taxon>Glycine</taxon>
        <taxon>Glycine subgen. Soja</taxon>
    </lineage>
</organism>
<proteinExistence type="evidence at transcript level"/>
<reference key="1">
    <citation type="journal article" date="1994" name="Proc. Natl. Acad. Sci. U.S.A.">
        <title>A phosphatidylinositol 3-kinase is induced during soybean nodule organogenesis and is associated with membrane proliferation.</title>
        <authorList>
            <person name="Hong Z."/>
            <person name="Verma D.P.S."/>
        </authorList>
    </citation>
    <scope>NUCLEOTIDE SEQUENCE [MRNA]</scope>
    <source>
        <strain>cv. Prize</strain>
        <tissue>Root</tissue>
    </source>
</reference>
<comment type="function">
    <text>Associated with membrane proliferation.</text>
</comment>
<comment type="catalytic activity">
    <reaction>
        <text>a 1,2-diacyl-sn-glycero-3-phospho-(1D-myo-inositol) + ATP = a 1,2-diacyl-sn-glycero-3-phospho-(1D-myo-inositol-3-phosphate) + ADP + H(+)</text>
        <dbReference type="Rhea" id="RHEA:12709"/>
        <dbReference type="ChEBI" id="CHEBI:15378"/>
        <dbReference type="ChEBI" id="CHEBI:30616"/>
        <dbReference type="ChEBI" id="CHEBI:57880"/>
        <dbReference type="ChEBI" id="CHEBI:58088"/>
        <dbReference type="ChEBI" id="CHEBI:456216"/>
        <dbReference type="EC" id="2.7.1.137"/>
    </reaction>
</comment>
<comment type="induction">
    <text>Repressed during nodule organogenesis and reinduced in mature nodules.</text>
</comment>
<comment type="similarity">
    <text evidence="3">Belongs to the PI3/PI4-kinase family.</text>
</comment>
<sequence length="814" mass="93282">MTGNEFRFFLSCDISVPVTFRVERLEGNLPLPNPKSPDLETNAPTENRTKELFVECALYIDGAPFGLPTRTRLESSGPSYCWNELITLTTKYRDLTAQSQLTFTVWDLSHGEGLIGGATILLFNNKKQLKTGKQKLRLWAGKEADGTFPTSTPGKVPRHERGELERLEKLVNKYERGQIQRVDWLDRLTFKTMERIKERESLKNGSSHLYLVVDFCSFEHRVVFQESGANFLFPSPIASTNDIVVVWDPEVGKINPSEHKQLKLARSLTRGVIDRDLKPSSNERKSIQRILKYPPTRTLSGDERQLLWKFRFSLMSEKRALTKFLRCVEWSDVQEAKQALELMGKWEMIDVCDALELLSPVFESEEVRAYAVSVLERADDEELQCYLLQLVQALRFERSDKSRLSHFLVQRALRNIELASFLRWYVAVELYDPAYAKRFYCTYEILEENMMKIAAGVNGEEDGFKQWQSLVRQTELTAQLCSITREVRNVRGNTQKKIEKLRQLLSGLLSELTYFDEPIRSPLAPGVLIAGIVPSESSIFKSALHPLRLSFRTANGGTCKIIFKKGDDLRQDQLVVQMVSLMDRLLKLENLDLHLTPYKVLATGQDEGMLEFIPSRSLAQILSENRSIISYLQKFHPDDHGPFGITATCLETFIKSCAGYSVITYILGIGDRHLDNLLLRNDGGLFHVDFGFILGRDPKPFPPPMKLCKEMVEAMGGAESQYYTRFKSYCCEAYNILRKSSNLILNLFYLMAGSNIPDIASDPEKGILKLQEKFRLDLDDEASIHFFQDLINESVSALFPQMVETIHRWAQYWR</sequence>
<protein>
    <recommendedName>
        <fullName>Phosphatidylinositol 3-kinase, root isoform</fullName>
        <shortName>PI3-kinase</shortName>
        <shortName>PI3K</shortName>
        <shortName>PtdIns-3-kinase</shortName>
        <ecNumber>2.7.1.137</ecNumber>
    </recommendedName>
    <alternativeName>
        <fullName>SPI3K-5</fullName>
    </alternativeName>
</protein>
<feature type="chain" id="PRO_0000088820" description="Phosphatidylinositol 3-kinase, root isoform">
    <location>
        <begin position="1"/>
        <end position="814"/>
    </location>
</feature>
<feature type="domain" description="C2 PI3K-type" evidence="3">
    <location>
        <begin position="14"/>
        <end position="177"/>
    </location>
</feature>
<feature type="domain" description="PIK helical" evidence="2">
    <location>
        <begin position="274"/>
        <end position="449"/>
    </location>
</feature>
<feature type="domain" description="PI3K/PI4K catalytic" evidence="1">
    <location>
        <begin position="533"/>
        <end position="799"/>
    </location>
</feature>
<feature type="region of interest" description="G-loop" evidence="1">
    <location>
        <begin position="539"/>
        <end position="545"/>
    </location>
</feature>
<feature type="region of interest" description="Catalytic loop" evidence="1">
    <location>
        <begin position="668"/>
        <end position="676"/>
    </location>
</feature>
<feature type="region of interest" description="Activation loop" evidence="1">
    <location>
        <begin position="687"/>
        <end position="708"/>
    </location>
</feature>
<keyword id="KW-0067">ATP-binding</keyword>
<keyword id="KW-0418">Kinase</keyword>
<keyword id="KW-0547">Nucleotide-binding</keyword>
<keyword id="KW-1185">Reference proteome</keyword>
<keyword id="KW-0808">Transferase</keyword>
<evidence type="ECO:0000255" key="1">
    <source>
        <dbReference type="PROSITE-ProRule" id="PRU00269"/>
    </source>
</evidence>
<evidence type="ECO:0000255" key="2">
    <source>
        <dbReference type="PROSITE-ProRule" id="PRU00878"/>
    </source>
</evidence>
<evidence type="ECO:0000255" key="3">
    <source>
        <dbReference type="PROSITE-ProRule" id="PRU00880"/>
    </source>
</evidence>
<dbReference type="EC" id="2.7.1.137"/>
<dbReference type="EMBL" id="L27265">
    <property type="protein sequence ID" value="AAA83995.1"/>
    <property type="molecule type" value="mRNA"/>
</dbReference>
<dbReference type="PIR" id="T07761">
    <property type="entry name" value="T07761"/>
</dbReference>
<dbReference type="RefSeq" id="NP_001236955.1">
    <property type="nucleotide sequence ID" value="NM_001250026.2"/>
</dbReference>
<dbReference type="SMR" id="P42347"/>
<dbReference type="FunCoup" id="P42347">
    <property type="interactions" value="7096"/>
</dbReference>
<dbReference type="STRING" id="3847.P42347"/>
<dbReference type="PaxDb" id="3847-GLYMA04G10090.1"/>
<dbReference type="GeneID" id="547983"/>
<dbReference type="KEGG" id="gmx:547983"/>
<dbReference type="eggNOG" id="KOG0906">
    <property type="taxonomic scope" value="Eukaryota"/>
</dbReference>
<dbReference type="InParanoid" id="P42347"/>
<dbReference type="OrthoDB" id="67688at2759"/>
<dbReference type="BRENDA" id="2.7.1.137">
    <property type="organism ID" value="2483"/>
</dbReference>
<dbReference type="Proteomes" id="UP000008827">
    <property type="component" value="Unplaced"/>
</dbReference>
<dbReference type="GO" id="GO:0005737">
    <property type="term" value="C:cytoplasm"/>
    <property type="evidence" value="ECO:0000318"/>
    <property type="project" value="GO_Central"/>
</dbReference>
<dbReference type="GO" id="GO:0005768">
    <property type="term" value="C:endosome"/>
    <property type="evidence" value="ECO:0000318"/>
    <property type="project" value="GO_Central"/>
</dbReference>
<dbReference type="GO" id="GO:0016020">
    <property type="term" value="C:membrane"/>
    <property type="evidence" value="ECO:0000318"/>
    <property type="project" value="GO_Central"/>
</dbReference>
<dbReference type="GO" id="GO:0005777">
    <property type="term" value="C:peroxisome"/>
    <property type="evidence" value="ECO:0000318"/>
    <property type="project" value="GO_Central"/>
</dbReference>
<dbReference type="GO" id="GO:0000407">
    <property type="term" value="C:phagophore assembly site"/>
    <property type="evidence" value="ECO:0000318"/>
    <property type="project" value="GO_Central"/>
</dbReference>
<dbReference type="GO" id="GO:0034271">
    <property type="term" value="C:phosphatidylinositol 3-kinase complex, class III, type I"/>
    <property type="evidence" value="ECO:0000318"/>
    <property type="project" value="GO_Central"/>
</dbReference>
<dbReference type="GO" id="GO:0034272">
    <property type="term" value="C:phosphatidylinositol 3-kinase complex, class III, type II"/>
    <property type="evidence" value="ECO:0000318"/>
    <property type="project" value="GO_Central"/>
</dbReference>
<dbReference type="GO" id="GO:0016303">
    <property type="term" value="F:1-phosphatidylinositol-3-kinase activity"/>
    <property type="evidence" value="ECO:0000318"/>
    <property type="project" value="GO_Central"/>
</dbReference>
<dbReference type="GO" id="GO:0005524">
    <property type="term" value="F:ATP binding"/>
    <property type="evidence" value="ECO:0007669"/>
    <property type="project" value="UniProtKB-KW"/>
</dbReference>
<dbReference type="GO" id="GO:0000045">
    <property type="term" value="P:autophagosome assembly"/>
    <property type="evidence" value="ECO:0000318"/>
    <property type="project" value="GO_Central"/>
</dbReference>
<dbReference type="GO" id="GO:0006897">
    <property type="term" value="P:endocytosis"/>
    <property type="evidence" value="ECO:0000318"/>
    <property type="project" value="GO_Central"/>
</dbReference>
<dbReference type="GO" id="GO:0000425">
    <property type="term" value="P:pexophagy"/>
    <property type="evidence" value="ECO:0000318"/>
    <property type="project" value="GO_Central"/>
</dbReference>
<dbReference type="GO" id="GO:0036092">
    <property type="term" value="P:phosphatidylinositol-3-phosphate biosynthetic process"/>
    <property type="evidence" value="ECO:0000318"/>
    <property type="project" value="GO_Central"/>
</dbReference>
<dbReference type="GO" id="GO:0048015">
    <property type="term" value="P:phosphatidylinositol-mediated signaling"/>
    <property type="evidence" value="ECO:0000318"/>
    <property type="project" value="GO_Central"/>
</dbReference>
<dbReference type="CDD" id="cd08397">
    <property type="entry name" value="C2_PI3K_class_III"/>
    <property type="match status" value="1"/>
</dbReference>
<dbReference type="CDD" id="cd00870">
    <property type="entry name" value="PI3Ka_III"/>
    <property type="match status" value="1"/>
</dbReference>
<dbReference type="CDD" id="cd00896">
    <property type="entry name" value="PI3Kc_III"/>
    <property type="match status" value="1"/>
</dbReference>
<dbReference type="FunFam" id="3.30.1010.10:FF:000002">
    <property type="entry name" value="Phosphatidylinositol 3-kinase catalytic subunit type 3"/>
    <property type="match status" value="1"/>
</dbReference>
<dbReference type="FunFam" id="2.60.40.150:FF:000171">
    <property type="entry name" value="Phosphatidylinositol 3-kinase VPS34"/>
    <property type="match status" value="1"/>
</dbReference>
<dbReference type="FunFam" id="1.10.1070.11:FF:000014">
    <property type="entry name" value="Phosphatidylinositol 3-kinase, root isoform"/>
    <property type="match status" value="1"/>
</dbReference>
<dbReference type="FunFam" id="1.25.40.70:FF:000012">
    <property type="entry name" value="phosphatidylinositol 3-kinase, root isoform"/>
    <property type="match status" value="1"/>
</dbReference>
<dbReference type="Gene3D" id="2.60.40.150">
    <property type="entry name" value="C2 domain"/>
    <property type="match status" value="1"/>
</dbReference>
<dbReference type="Gene3D" id="1.10.1070.11">
    <property type="entry name" value="Phosphatidylinositol 3-/4-kinase, catalytic domain"/>
    <property type="match status" value="1"/>
</dbReference>
<dbReference type="Gene3D" id="3.30.1010.10">
    <property type="entry name" value="Phosphatidylinositol 3-kinase Catalytic Subunit, Chain A, domain 4"/>
    <property type="match status" value="1"/>
</dbReference>
<dbReference type="Gene3D" id="1.25.40.70">
    <property type="entry name" value="Phosphatidylinositol 3-kinase, accessory domain (PIK)"/>
    <property type="match status" value="1"/>
</dbReference>
<dbReference type="InterPro" id="IPR016024">
    <property type="entry name" value="ARM-type_fold"/>
</dbReference>
<dbReference type="InterPro" id="IPR035892">
    <property type="entry name" value="C2_domain_sf"/>
</dbReference>
<dbReference type="InterPro" id="IPR011009">
    <property type="entry name" value="Kinase-like_dom_sf"/>
</dbReference>
<dbReference type="InterPro" id="IPR011162">
    <property type="entry name" value="MHC_I/II-like_Ag-recog"/>
</dbReference>
<dbReference type="InterPro" id="IPR000403">
    <property type="entry name" value="PI3/4_kinase_cat_dom"/>
</dbReference>
<dbReference type="InterPro" id="IPR036940">
    <property type="entry name" value="PI3/4_kinase_cat_sf"/>
</dbReference>
<dbReference type="InterPro" id="IPR018936">
    <property type="entry name" value="PI3/4_kinase_CS"/>
</dbReference>
<dbReference type="InterPro" id="IPR002420">
    <property type="entry name" value="PI3K-type_C2_dom"/>
</dbReference>
<dbReference type="InterPro" id="IPR001263">
    <property type="entry name" value="PI3K_accessory_dom"/>
</dbReference>
<dbReference type="InterPro" id="IPR042236">
    <property type="entry name" value="PI3K_accessory_sf"/>
</dbReference>
<dbReference type="InterPro" id="IPR008290">
    <property type="entry name" value="PI3K_Vps34"/>
</dbReference>
<dbReference type="InterPro" id="IPR015433">
    <property type="entry name" value="PI_Kinase"/>
</dbReference>
<dbReference type="PANTHER" id="PTHR10048:SF7">
    <property type="entry name" value="PHOSPHATIDYLINOSITOL 3-KINASE CATALYTIC SUBUNIT TYPE 3"/>
    <property type="match status" value="1"/>
</dbReference>
<dbReference type="PANTHER" id="PTHR10048">
    <property type="entry name" value="PHOSPHATIDYLINOSITOL KINASE"/>
    <property type="match status" value="1"/>
</dbReference>
<dbReference type="Pfam" id="PF00454">
    <property type="entry name" value="PI3_PI4_kinase"/>
    <property type="match status" value="1"/>
</dbReference>
<dbReference type="Pfam" id="PF00792">
    <property type="entry name" value="PI3K_C2"/>
    <property type="match status" value="1"/>
</dbReference>
<dbReference type="Pfam" id="PF00613">
    <property type="entry name" value="PI3Ka"/>
    <property type="match status" value="1"/>
</dbReference>
<dbReference type="PIRSF" id="PIRSF000587">
    <property type="entry name" value="PI3K_Vps34"/>
    <property type="match status" value="1"/>
</dbReference>
<dbReference type="SMART" id="SM00142">
    <property type="entry name" value="PI3K_C2"/>
    <property type="match status" value="1"/>
</dbReference>
<dbReference type="SMART" id="SM00145">
    <property type="entry name" value="PI3Ka"/>
    <property type="match status" value="1"/>
</dbReference>
<dbReference type="SMART" id="SM00146">
    <property type="entry name" value="PI3Kc"/>
    <property type="match status" value="1"/>
</dbReference>
<dbReference type="SUPFAM" id="SSF48371">
    <property type="entry name" value="ARM repeat"/>
    <property type="match status" value="1"/>
</dbReference>
<dbReference type="SUPFAM" id="SSF49562">
    <property type="entry name" value="C2 domain (Calcium/lipid-binding domain, CaLB)"/>
    <property type="match status" value="1"/>
</dbReference>
<dbReference type="SUPFAM" id="SSF54452">
    <property type="entry name" value="MHC antigen-recognition domain"/>
    <property type="match status" value="1"/>
</dbReference>
<dbReference type="SUPFAM" id="SSF56112">
    <property type="entry name" value="Protein kinase-like (PK-like)"/>
    <property type="match status" value="1"/>
</dbReference>
<dbReference type="PROSITE" id="PS51547">
    <property type="entry name" value="C2_PI3K"/>
    <property type="match status" value="1"/>
</dbReference>
<dbReference type="PROSITE" id="PS00915">
    <property type="entry name" value="PI3_4_KINASE_1"/>
    <property type="match status" value="1"/>
</dbReference>
<dbReference type="PROSITE" id="PS00916">
    <property type="entry name" value="PI3_4_KINASE_2"/>
    <property type="match status" value="1"/>
</dbReference>
<dbReference type="PROSITE" id="PS50290">
    <property type="entry name" value="PI3_4_KINASE_3"/>
    <property type="match status" value="1"/>
</dbReference>
<dbReference type="PROSITE" id="PS51545">
    <property type="entry name" value="PIK_HELICAL"/>
    <property type="match status" value="1"/>
</dbReference>
<name>PI3K1_SOYBN</name>